<feature type="chain" id="PRO_1000045222" description="5-oxoprolinase subunit A">
    <location>
        <begin position="1"/>
        <end position="244"/>
    </location>
</feature>
<keyword id="KW-0067">ATP-binding</keyword>
<keyword id="KW-0378">Hydrolase</keyword>
<keyword id="KW-0547">Nucleotide-binding</keyword>
<keyword id="KW-1185">Reference proteome</keyword>
<reference key="1">
    <citation type="journal article" date="2005" name="Nucleic Acids Res.">
        <title>Genome dynamics and diversity of Shigella species, the etiologic agents of bacillary dysentery.</title>
        <authorList>
            <person name="Yang F."/>
            <person name="Yang J."/>
            <person name="Zhang X."/>
            <person name="Chen L."/>
            <person name="Jiang Y."/>
            <person name="Yan Y."/>
            <person name="Tang X."/>
            <person name="Wang J."/>
            <person name="Xiong Z."/>
            <person name="Dong J."/>
            <person name="Xue Y."/>
            <person name="Zhu Y."/>
            <person name="Xu X."/>
            <person name="Sun L."/>
            <person name="Chen S."/>
            <person name="Nie H."/>
            <person name="Peng J."/>
            <person name="Xu J."/>
            <person name="Wang Y."/>
            <person name="Yuan Z."/>
            <person name="Wen Y."/>
            <person name="Yao Z."/>
            <person name="Shen Y."/>
            <person name="Qiang B."/>
            <person name="Hou Y."/>
            <person name="Yu J."/>
            <person name="Jin Q."/>
        </authorList>
    </citation>
    <scope>NUCLEOTIDE SEQUENCE [LARGE SCALE GENOMIC DNA]</scope>
    <source>
        <strain>Sd197</strain>
    </source>
</reference>
<sequence length="244" mass="25871">MKIDLNADLGEGCASDAELLTLVSSANIACGFHAGDAQTMQACVREAIKNGVAIGAHPSFPDRENFGRSAMQLPPETVYAQTLYQIGALATIARAQGGVMRHVKPHGMLYNQAAKEAQLADAIARAVYACDPALVLVGLAGSELIRAGKQYGLTTREEVFADRGYQADGSLVPRNQPGALIENEEQALAQTLEMVQHGRVKSITGEWATVTAQTVCLHGDGEHALAFARRLRSTFAEKGIVVAA</sequence>
<accession>Q32IM0</accession>
<comment type="function">
    <text evidence="1">Catalyzes the cleavage of 5-oxoproline to form L-glutamate coupled to the hydrolysis of ATP to ADP and inorganic phosphate.</text>
</comment>
<comment type="catalytic activity">
    <reaction evidence="1">
        <text>5-oxo-L-proline + ATP + 2 H2O = L-glutamate + ADP + phosphate + H(+)</text>
        <dbReference type="Rhea" id="RHEA:10348"/>
        <dbReference type="ChEBI" id="CHEBI:15377"/>
        <dbReference type="ChEBI" id="CHEBI:15378"/>
        <dbReference type="ChEBI" id="CHEBI:29985"/>
        <dbReference type="ChEBI" id="CHEBI:30616"/>
        <dbReference type="ChEBI" id="CHEBI:43474"/>
        <dbReference type="ChEBI" id="CHEBI:58402"/>
        <dbReference type="ChEBI" id="CHEBI:456216"/>
        <dbReference type="EC" id="3.5.2.9"/>
    </reaction>
</comment>
<comment type="subunit">
    <text evidence="1">Forms a complex composed of PxpA, PxpB and PxpC.</text>
</comment>
<comment type="similarity">
    <text evidence="1">Belongs to the LamB/PxpA family.</text>
</comment>
<proteinExistence type="inferred from homology"/>
<evidence type="ECO:0000255" key="1">
    <source>
        <dbReference type="HAMAP-Rule" id="MF_00691"/>
    </source>
</evidence>
<organism>
    <name type="scientific">Shigella dysenteriae serotype 1 (strain Sd197)</name>
    <dbReference type="NCBI Taxonomy" id="300267"/>
    <lineage>
        <taxon>Bacteria</taxon>
        <taxon>Pseudomonadati</taxon>
        <taxon>Pseudomonadota</taxon>
        <taxon>Gammaproteobacteria</taxon>
        <taxon>Enterobacterales</taxon>
        <taxon>Enterobacteriaceae</taxon>
        <taxon>Shigella</taxon>
    </lineage>
</organism>
<protein>
    <recommendedName>
        <fullName evidence="1">5-oxoprolinase subunit A</fullName>
        <shortName evidence="1">5-OPase subunit A</shortName>
        <ecNumber evidence="1">3.5.2.9</ecNumber>
    </recommendedName>
    <alternativeName>
        <fullName evidence="1">5-oxoprolinase (ATP-hydrolyzing) subunit A</fullName>
    </alternativeName>
</protein>
<name>PXPA_SHIDS</name>
<dbReference type="EC" id="3.5.2.9" evidence="1"/>
<dbReference type="EMBL" id="CP000034">
    <property type="protein sequence ID" value="ABB60837.1"/>
    <property type="molecule type" value="Genomic_DNA"/>
</dbReference>
<dbReference type="RefSeq" id="WP_000687138.1">
    <property type="nucleotide sequence ID" value="NC_007606.1"/>
</dbReference>
<dbReference type="RefSeq" id="YP_402326.1">
    <property type="nucleotide sequence ID" value="NC_007606.1"/>
</dbReference>
<dbReference type="SMR" id="Q32IM0"/>
<dbReference type="STRING" id="300267.SDY_0648"/>
<dbReference type="EnsemblBacteria" id="ABB60837">
    <property type="protein sequence ID" value="ABB60837"/>
    <property type="gene ID" value="SDY_0648"/>
</dbReference>
<dbReference type="KEGG" id="sdy:SDY_0648"/>
<dbReference type="PATRIC" id="fig|300267.13.peg.756"/>
<dbReference type="HOGENOM" id="CLU_069535_0_0_6"/>
<dbReference type="Proteomes" id="UP000002716">
    <property type="component" value="Chromosome"/>
</dbReference>
<dbReference type="GO" id="GO:0017168">
    <property type="term" value="F:5-oxoprolinase (ATP-hydrolyzing) activity"/>
    <property type="evidence" value="ECO:0007669"/>
    <property type="project" value="UniProtKB-UniRule"/>
</dbReference>
<dbReference type="GO" id="GO:0005524">
    <property type="term" value="F:ATP binding"/>
    <property type="evidence" value="ECO:0007669"/>
    <property type="project" value="UniProtKB-UniRule"/>
</dbReference>
<dbReference type="GO" id="GO:0005975">
    <property type="term" value="P:carbohydrate metabolic process"/>
    <property type="evidence" value="ECO:0007669"/>
    <property type="project" value="InterPro"/>
</dbReference>
<dbReference type="CDD" id="cd10800">
    <property type="entry name" value="LamB_YcsF_YbgL_like"/>
    <property type="match status" value="1"/>
</dbReference>
<dbReference type="Gene3D" id="3.20.20.370">
    <property type="entry name" value="Glycoside hydrolase/deacetylase"/>
    <property type="match status" value="1"/>
</dbReference>
<dbReference type="HAMAP" id="MF_00691">
    <property type="entry name" value="PxpA"/>
    <property type="match status" value="1"/>
</dbReference>
<dbReference type="InterPro" id="IPR011330">
    <property type="entry name" value="Glyco_hydro/deAcase_b/a-brl"/>
</dbReference>
<dbReference type="InterPro" id="IPR005501">
    <property type="entry name" value="LamB/YcsF/PxpA-like"/>
</dbReference>
<dbReference type="NCBIfam" id="NF003812">
    <property type="entry name" value="PRK05406.1-1"/>
    <property type="match status" value="1"/>
</dbReference>
<dbReference type="NCBIfam" id="NF003814">
    <property type="entry name" value="PRK05406.1-3"/>
    <property type="match status" value="1"/>
</dbReference>
<dbReference type="NCBIfam" id="NF003815">
    <property type="entry name" value="PRK05406.1-4"/>
    <property type="match status" value="1"/>
</dbReference>
<dbReference type="NCBIfam" id="NF003816">
    <property type="entry name" value="PRK05406.1-5"/>
    <property type="match status" value="1"/>
</dbReference>
<dbReference type="PANTHER" id="PTHR30292:SF0">
    <property type="entry name" value="5-OXOPROLINASE SUBUNIT A"/>
    <property type="match status" value="1"/>
</dbReference>
<dbReference type="PANTHER" id="PTHR30292">
    <property type="entry name" value="UNCHARACTERIZED PROTEIN YBGL-RELATED"/>
    <property type="match status" value="1"/>
</dbReference>
<dbReference type="Pfam" id="PF03746">
    <property type="entry name" value="LamB_YcsF"/>
    <property type="match status" value="1"/>
</dbReference>
<dbReference type="SUPFAM" id="SSF88713">
    <property type="entry name" value="Glycoside hydrolase/deacetylase"/>
    <property type="match status" value="1"/>
</dbReference>
<gene>
    <name evidence="1" type="primary">pxpA</name>
    <name type="ordered locus">SDY_0648</name>
</gene>